<name>PFKA_MESHJ</name>
<organism>
    <name type="scientific">Mesomycoplasma hyopneumoniae (strain J / ATCC 25934 / NCTC 10110)</name>
    <name type="common">Mycoplasma hyopneumoniae</name>
    <dbReference type="NCBI Taxonomy" id="262719"/>
    <lineage>
        <taxon>Bacteria</taxon>
        <taxon>Bacillati</taxon>
        <taxon>Mycoplasmatota</taxon>
        <taxon>Mycoplasmoidales</taxon>
        <taxon>Metamycoplasmataceae</taxon>
        <taxon>Mesomycoplasma</taxon>
    </lineage>
</organism>
<dbReference type="EC" id="2.7.1.11" evidence="1"/>
<dbReference type="EMBL" id="AE017243">
    <property type="protein sequence ID" value="AAZ44199.1"/>
    <property type="molecule type" value="Genomic_DNA"/>
</dbReference>
<dbReference type="RefSeq" id="WP_011283916.1">
    <property type="nucleotide sequence ID" value="NC_007295.1"/>
</dbReference>
<dbReference type="SMR" id="Q4AAM2"/>
<dbReference type="GeneID" id="41334407"/>
<dbReference type="KEGG" id="mhj:MHJ_0107"/>
<dbReference type="eggNOG" id="COG0205">
    <property type="taxonomic scope" value="Bacteria"/>
</dbReference>
<dbReference type="HOGENOM" id="CLU_020655_0_1_14"/>
<dbReference type="OrthoDB" id="9802503at2"/>
<dbReference type="UniPathway" id="UPA00109">
    <property type="reaction ID" value="UER00182"/>
</dbReference>
<dbReference type="Proteomes" id="UP000000548">
    <property type="component" value="Chromosome"/>
</dbReference>
<dbReference type="GO" id="GO:0005945">
    <property type="term" value="C:6-phosphofructokinase complex"/>
    <property type="evidence" value="ECO:0007669"/>
    <property type="project" value="TreeGrafter"/>
</dbReference>
<dbReference type="GO" id="GO:0003872">
    <property type="term" value="F:6-phosphofructokinase activity"/>
    <property type="evidence" value="ECO:0007669"/>
    <property type="project" value="UniProtKB-UniRule"/>
</dbReference>
<dbReference type="GO" id="GO:0016208">
    <property type="term" value="F:AMP binding"/>
    <property type="evidence" value="ECO:0007669"/>
    <property type="project" value="TreeGrafter"/>
</dbReference>
<dbReference type="GO" id="GO:0005524">
    <property type="term" value="F:ATP binding"/>
    <property type="evidence" value="ECO:0007669"/>
    <property type="project" value="UniProtKB-KW"/>
</dbReference>
<dbReference type="GO" id="GO:0070095">
    <property type="term" value="F:fructose-6-phosphate binding"/>
    <property type="evidence" value="ECO:0007669"/>
    <property type="project" value="TreeGrafter"/>
</dbReference>
<dbReference type="GO" id="GO:0042802">
    <property type="term" value="F:identical protein binding"/>
    <property type="evidence" value="ECO:0007669"/>
    <property type="project" value="TreeGrafter"/>
</dbReference>
<dbReference type="GO" id="GO:0046872">
    <property type="term" value="F:metal ion binding"/>
    <property type="evidence" value="ECO:0007669"/>
    <property type="project" value="UniProtKB-KW"/>
</dbReference>
<dbReference type="GO" id="GO:0048029">
    <property type="term" value="F:monosaccharide binding"/>
    <property type="evidence" value="ECO:0007669"/>
    <property type="project" value="TreeGrafter"/>
</dbReference>
<dbReference type="GO" id="GO:0061621">
    <property type="term" value="P:canonical glycolysis"/>
    <property type="evidence" value="ECO:0007669"/>
    <property type="project" value="TreeGrafter"/>
</dbReference>
<dbReference type="GO" id="GO:0030388">
    <property type="term" value="P:fructose 1,6-bisphosphate metabolic process"/>
    <property type="evidence" value="ECO:0007669"/>
    <property type="project" value="TreeGrafter"/>
</dbReference>
<dbReference type="GO" id="GO:0006002">
    <property type="term" value="P:fructose 6-phosphate metabolic process"/>
    <property type="evidence" value="ECO:0007669"/>
    <property type="project" value="InterPro"/>
</dbReference>
<dbReference type="FunFam" id="3.40.50.460:FF:000002">
    <property type="entry name" value="ATP-dependent 6-phosphofructokinase"/>
    <property type="match status" value="1"/>
</dbReference>
<dbReference type="Gene3D" id="3.40.50.450">
    <property type="match status" value="1"/>
</dbReference>
<dbReference type="Gene3D" id="3.40.50.460">
    <property type="entry name" value="Phosphofructokinase domain"/>
    <property type="match status" value="1"/>
</dbReference>
<dbReference type="HAMAP" id="MF_00339">
    <property type="entry name" value="Phosphofructokinase_I_B1"/>
    <property type="match status" value="1"/>
</dbReference>
<dbReference type="InterPro" id="IPR022953">
    <property type="entry name" value="ATP_PFK"/>
</dbReference>
<dbReference type="InterPro" id="IPR012003">
    <property type="entry name" value="ATP_PFK_prok-type"/>
</dbReference>
<dbReference type="InterPro" id="IPR012828">
    <property type="entry name" value="PFKA_ATP_prok"/>
</dbReference>
<dbReference type="InterPro" id="IPR015912">
    <property type="entry name" value="Phosphofructokinase_CS"/>
</dbReference>
<dbReference type="InterPro" id="IPR000023">
    <property type="entry name" value="Phosphofructokinase_dom"/>
</dbReference>
<dbReference type="InterPro" id="IPR035966">
    <property type="entry name" value="PKF_sf"/>
</dbReference>
<dbReference type="NCBIfam" id="TIGR02482">
    <property type="entry name" value="PFKA_ATP"/>
    <property type="match status" value="1"/>
</dbReference>
<dbReference type="NCBIfam" id="NF002872">
    <property type="entry name" value="PRK03202.1"/>
    <property type="match status" value="1"/>
</dbReference>
<dbReference type="PANTHER" id="PTHR13697:SF4">
    <property type="entry name" value="ATP-DEPENDENT 6-PHOSPHOFRUCTOKINASE"/>
    <property type="match status" value="1"/>
</dbReference>
<dbReference type="PANTHER" id="PTHR13697">
    <property type="entry name" value="PHOSPHOFRUCTOKINASE"/>
    <property type="match status" value="1"/>
</dbReference>
<dbReference type="Pfam" id="PF00365">
    <property type="entry name" value="PFK"/>
    <property type="match status" value="1"/>
</dbReference>
<dbReference type="PIRSF" id="PIRSF000532">
    <property type="entry name" value="ATP_PFK_prok"/>
    <property type="match status" value="1"/>
</dbReference>
<dbReference type="PRINTS" id="PR00476">
    <property type="entry name" value="PHFRCTKINASE"/>
</dbReference>
<dbReference type="SUPFAM" id="SSF53784">
    <property type="entry name" value="Phosphofructokinase"/>
    <property type="match status" value="1"/>
</dbReference>
<dbReference type="PROSITE" id="PS00433">
    <property type="entry name" value="PHOSPHOFRUCTOKINASE"/>
    <property type="match status" value="1"/>
</dbReference>
<sequence length="322" mass="34951">MSKKIGILTSGGDAPGMNSAISFLAKSALSLGFEPYLIFDGYSGIIARKILPAKNFPYNGISSFGGTAIGSSRFPEFKKEEVQNKAVEILSEIGISSLVVVGGDGTYNGGYKLHLKGIKVIALPGTIDNDIQFTDYTIGFDTALNTIVETIDKLRDTANSHRRCFVVEVMGRHCQDLALYSAMATGSEILITNTNILTPEEVSQKVLEQFAKGKPSVIVTITENILPNLKEFAAKIEELTKISTRSLEVGHTQRGGRPSAFDRILAAKMAMKAMELINQDKSGLAISYLDGKIQTFDIAKVVSKPVRKTNDLVLEINKINQN</sequence>
<proteinExistence type="inferred from homology"/>
<protein>
    <recommendedName>
        <fullName evidence="1">ATP-dependent 6-phosphofructokinase</fullName>
        <shortName evidence="1">ATP-PFK</shortName>
        <shortName evidence="1">Phosphofructokinase</shortName>
        <ecNumber evidence="1">2.7.1.11</ecNumber>
    </recommendedName>
    <alternativeName>
        <fullName evidence="1">Phosphohexokinase</fullName>
    </alternativeName>
</protein>
<reference key="1">
    <citation type="journal article" date="2005" name="J. Bacteriol.">
        <title>Swine and poultry pathogens: the complete genome sequences of two strains of Mycoplasma hyopneumoniae and a strain of Mycoplasma synoviae.</title>
        <authorList>
            <person name="Vasconcelos A.T.R."/>
            <person name="Ferreira H.B."/>
            <person name="Bizarro C.V."/>
            <person name="Bonatto S.L."/>
            <person name="Carvalho M.O."/>
            <person name="Pinto P.M."/>
            <person name="Almeida D.F."/>
            <person name="Almeida L.G.P."/>
            <person name="Almeida R."/>
            <person name="Alves-Junior L."/>
            <person name="Assuncao E.N."/>
            <person name="Azevedo V.A.C."/>
            <person name="Bogo M.R."/>
            <person name="Brigido M.M."/>
            <person name="Brocchi M."/>
            <person name="Burity H.A."/>
            <person name="Camargo A.A."/>
            <person name="Camargo S.S."/>
            <person name="Carepo M.S."/>
            <person name="Carraro D.M."/>
            <person name="de Mattos Cascardo J.C."/>
            <person name="Castro L.A."/>
            <person name="Cavalcanti G."/>
            <person name="Chemale G."/>
            <person name="Collevatti R.G."/>
            <person name="Cunha C.W."/>
            <person name="Dallagiovanna B."/>
            <person name="Dambros B.P."/>
            <person name="Dellagostin O.A."/>
            <person name="Falcao C."/>
            <person name="Fantinatti-Garboggini F."/>
            <person name="Felipe M.S.S."/>
            <person name="Fiorentin L."/>
            <person name="Franco G.R."/>
            <person name="Freitas N.S.A."/>
            <person name="Frias D."/>
            <person name="Grangeiro T.B."/>
            <person name="Grisard E.C."/>
            <person name="Guimaraes C.T."/>
            <person name="Hungria M."/>
            <person name="Jardim S.N."/>
            <person name="Krieger M.A."/>
            <person name="Laurino J.P."/>
            <person name="Lima L.F.A."/>
            <person name="Lopes M.I."/>
            <person name="Loreto E.L.S."/>
            <person name="Madeira H.M.F."/>
            <person name="Manfio G.P."/>
            <person name="Maranhao A.Q."/>
            <person name="Martinkovics C.T."/>
            <person name="Medeiros S.R.B."/>
            <person name="Moreira M.A.M."/>
            <person name="Neiva M."/>
            <person name="Ramalho-Neto C.E."/>
            <person name="Nicolas M.F."/>
            <person name="Oliveira S.C."/>
            <person name="Paixao R.F.C."/>
            <person name="Pedrosa F.O."/>
            <person name="Pena S.D.J."/>
            <person name="Pereira M."/>
            <person name="Pereira-Ferrari L."/>
            <person name="Piffer I."/>
            <person name="Pinto L.S."/>
            <person name="Potrich D.P."/>
            <person name="Salim A.C.M."/>
            <person name="Santos F.R."/>
            <person name="Schmitt R."/>
            <person name="Schneider M.P.C."/>
            <person name="Schrank A."/>
            <person name="Schrank I.S."/>
            <person name="Schuck A.F."/>
            <person name="Seuanez H.N."/>
            <person name="Silva D.W."/>
            <person name="Silva R."/>
            <person name="Silva S.C."/>
            <person name="Soares C.M.A."/>
            <person name="Souza K.R.L."/>
            <person name="Souza R.C."/>
            <person name="Staats C.C."/>
            <person name="Steffens M.B.R."/>
            <person name="Teixeira S.M.R."/>
            <person name="Urmenyi T.P."/>
            <person name="Vainstein M.H."/>
            <person name="Zuccherato L.W."/>
            <person name="Simpson A.J.G."/>
            <person name="Zaha A."/>
        </authorList>
    </citation>
    <scope>NUCLEOTIDE SEQUENCE [LARGE SCALE GENOMIC DNA]</scope>
    <source>
        <strain>J / ATCC 25934 / NCTC 10110</strain>
    </source>
</reference>
<comment type="function">
    <text evidence="1">Catalyzes the phosphorylation of D-fructose 6-phosphate to fructose 1,6-bisphosphate by ATP, the first committing step of glycolysis.</text>
</comment>
<comment type="catalytic activity">
    <reaction evidence="1">
        <text>beta-D-fructose 6-phosphate + ATP = beta-D-fructose 1,6-bisphosphate + ADP + H(+)</text>
        <dbReference type="Rhea" id="RHEA:16109"/>
        <dbReference type="ChEBI" id="CHEBI:15378"/>
        <dbReference type="ChEBI" id="CHEBI:30616"/>
        <dbReference type="ChEBI" id="CHEBI:32966"/>
        <dbReference type="ChEBI" id="CHEBI:57634"/>
        <dbReference type="ChEBI" id="CHEBI:456216"/>
        <dbReference type="EC" id="2.7.1.11"/>
    </reaction>
</comment>
<comment type="cofactor">
    <cofactor evidence="1">
        <name>Mg(2+)</name>
        <dbReference type="ChEBI" id="CHEBI:18420"/>
    </cofactor>
</comment>
<comment type="activity regulation">
    <text evidence="1">Allosterically activated by ADP and other diphosphonucleosides, and allosterically inhibited by phosphoenolpyruvate.</text>
</comment>
<comment type="pathway">
    <text evidence="1">Carbohydrate degradation; glycolysis; D-glyceraldehyde 3-phosphate and glycerone phosphate from D-glucose: step 3/4.</text>
</comment>
<comment type="subunit">
    <text evidence="1">Homotetramer.</text>
</comment>
<comment type="subcellular location">
    <subcellularLocation>
        <location evidence="1">Cytoplasm</location>
    </subcellularLocation>
</comment>
<comment type="similarity">
    <text evidence="1">Belongs to the phosphofructokinase type A (PFKA) family. ATP-dependent PFK group I subfamily. Prokaryotic clade 'B1' sub-subfamily.</text>
</comment>
<gene>
    <name evidence="1" type="primary">pfkA</name>
    <name type="ordered locus">MHJ_0107</name>
</gene>
<evidence type="ECO:0000255" key="1">
    <source>
        <dbReference type="HAMAP-Rule" id="MF_00339"/>
    </source>
</evidence>
<accession>Q4AAM2</accession>
<keyword id="KW-0021">Allosteric enzyme</keyword>
<keyword id="KW-0067">ATP-binding</keyword>
<keyword id="KW-0963">Cytoplasm</keyword>
<keyword id="KW-0324">Glycolysis</keyword>
<keyword id="KW-0418">Kinase</keyword>
<keyword id="KW-0460">Magnesium</keyword>
<keyword id="KW-0479">Metal-binding</keyword>
<keyword id="KW-0547">Nucleotide-binding</keyword>
<keyword id="KW-0808">Transferase</keyword>
<feature type="chain" id="PRO_1000059781" description="ATP-dependent 6-phosphofructokinase">
    <location>
        <begin position="1"/>
        <end position="322"/>
    </location>
</feature>
<feature type="active site" description="Proton acceptor" evidence="1">
    <location>
        <position position="128"/>
    </location>
</feature>
<feature type="binding site" evidence="1">
    <location>
        <position position="12"/>
    </location>
    <ligand>
        <name>ATP</name>
        <dbReference type="ChEBI" id="CHEBI:30616"/>
    </ligand>
</feature>
<feature type="binding site" evidence="1">
    <location>
        <begin position="73"/>
        <end position="74"/>
    </location>
    <ligand>
        <name>ATP</name>
        <dbReference type="ChEBI" id="CHEBI:30616"/>
    </ligand>
</feature>
<feature type="binding site" evidence="1">
    <location>
        <begin position="103"/>
        <end position="106"/>
    </location>
    <ligand>
        <name>ATP</name>
        <dbReference type="ChEBI" id="CHEBI:30616"/>
    </ligand>
</feature>
<feature type="binding site" evidence="1">
    <location>
        <position position="104"/>
    </location>
    <ligand>
        <name>Mg(2+)</name>
        <dbReference type="ChEBI" id="CHEBI:18420"/>
        <note>catalytic</note>
    </ligand>
</feature>
<feature type="binding site" description="in other chain" evidence="1">
    <location>
        <begin position="126"/>
        <end position="128"/>
    </location>
    <ligand>
        <name>substrate</name>
        <note>ligand shared between dimeric partners</note>
    </ligand>
</feature>
<feature type="binding site" evidence="1">
    <location>
        <position position="155"/>
    </location>
    <ligand>
        <name>ADP</name>
        <dbReference type="ChEBI" id="CHEBI:456216"/>
        <note>allosteric activator</note>
    </ligand>
</feature>
<feature type="binding site" evidence="1">
    <location>
        <position position="163"/>
    </location>
    <ligand>
        <name>substrate</name>
        <note>ligand shared between dimeric partners</note>
    </ligand>
</feature>
<feature type="binding site" description="in other chain" evidence="1">
    <location>
        <begin position="170"/>
        <end position="172"/>
    </location>
    <ligand>
        <name>substrate</name>
        <note>ligand shared between dimeric partners</note>
    </ligand>
</feature>
<feature type="binding site" evidence="1">
    <location>
        <begin position="186"/>
        <end position="188"/>
    </location>
    <ligand>
        <name>ADP</name>
        <dbReference type="ChEBI" id="CHEBI:456216"/>
        <note>allosteric activator</note>
    </ligand>
</feature>
<feature type="binding site" evidence="1">
    <location>
        <position position="212"/>
    </location>
    <ligand>
        <name>ADP</name>
        <dbReference type="ChEBI" id="CHEBI:456216"/>
        <note>allosteric activator</note>
    </ligand>
</feature>
<feature type="binding site" evidence="1">
    <location>
        <begin position="214"/>
        <end position="216"/>
    </location>
    <ligand>
        <name>ADP</name>
        <dbReference type="ChEBI" id="CHEBI:456216"/>
        <note>allosteric activator</note>
    </ligand>
</feature>
<feature type="binding site" description="in other chain" evidence="1">
    <location>
        <position position="223"/>
    </location>
    <ligand>
        <name>substrate</name>
        <note>ligand shared between dimeric partners</note>
    </ligand>
</feature>
<feature type="binding site" evidence="1">
    <location>
        <position position="245"/>
    </location>
    <ligand>
        <name>substrate</name>
        <note>ligand shared between dimeric partners</note>
    </ligand>
</feature>
<feature type="binding site" description="in other chain" evidence="1">
    <location>
        <begin position="251"/>
        <end position="254"/>
    </location>
    <ligand>
        <name>substrate</name>
        <note>ligand shared between dimeric partners</note>
    </ligand>
</feature>